<comment type="function">
    <text evidence="1">Presumably involved in the processing and regular turnover of intracellular proteins. Catalyzes the removal of unsubstituted N-terminal amino acids from various peptides.</text>
</comment>
<comment type="catalytic activity">
    <reaction evidence="1">
        <text>Release of an N-terminal amino acid, Xaa-|-Yaa-, in which Xaa is preferably Leu, but may be other amino acids including Pro although not Arg or Lys, and Yaa may be Pro. Amino acid amides and methyl esters are also readily hydrolyzed, but rates on arylamides are exceedingly low.</text>
        <dbReference type="EC" id="3.4.11.1"/>
    </reaction>
</comment>
<comment type="catalytic activity">
    <reaction evidence="1">
        <text>Release of an N-terminal amino acid, preferentially leucine, but not glutamic or aspartic acids.</text>
        <dbReference type="EC" id="3.4.11.10"/>
    </reaction>
</comment>
<comment type="cofactor">
    <cofactor evidence="1">
        <name>Mn(2+)</name>
        <dbReference type="ChEBI" id="CHEBI:29035"/>
    </cofactor>
    <text evidence="1">Binds 2 manganese ions per subunit.</text>
</comment>
<comment type="subcellular location">
    <subcellularLocation>
        <location evidence="1">Cytoplasm</location>
    </subcellularLocation>
</comment>
<comment type="similarity">
    <text evidence="1">Belongs to the peptidase M17 family.</text>
</comment>
<dbReference type="EC" id="3.4.11.1" evidence="1"/>
<dbReference type="EC" id="3.4.11.10" evidence="1"/>
<dbReference type="EMBL" id="CP000450">
    <property type="protein sequence ID" value="ABI58871.1"/>
    <property type="molecule type" value="Genomic_DNA"/>
</dbReference>
<dbReference type="RefSeq" id="WP_011633712.1">
    <property type="nucleotide sequence ID" value="NC_008344.1"/>
</dbReference>
<dbReference type="SMR" id="Q0AIF5"/>
<dbReference type="STRING" id="335283.Neut_0599"/>
<dbReference type="MEROPS" id="M17.003"/>
<dbReference type="KEGG" id="net:Neut_0599"/>
<dbReference type="eggNOG" id="COG0260">
    <property type="taxonomic scope" value="Bacteria"/>
</dbReference>
<dbReference type="HOGENOM" id="CLU_013734_0_1_4"/>
<dbReference type="OrthoDB" id="9809354at2"/>
<dbReference type="Proteomes" id="UP000001966">
    <property type="component" value="Chromosome"/>
</dbReference>
<dbReference type="GO" id="GO:0005737">
    <property type="term" value="C:cytoplasm"/>
    <property type="evidence" value="ECO:0007669"/>
    <property type="project" value="UniProtKB-SubCell"/>
</dbReference>
<dbReference type="GO" id="GO:0030145">
    <property type="term" value="F:manganese ion binding"/>
    <property type="evidence" value="ECO:0007669"/>
    <property type="project" value="UniProtKB-UniRule"/>
</dbReference>
<dbReference type="GO" id="GO:0070006">
    <property type="term" value="F:metalloaminopeptidase activity"/>
    <property type="evidence" value="ECO:0007669"/>
    <property type="project" value="InterPro"/>
</dbReference>
<dbReference type="GO" id="GO:0006508">
    <property type="term" value="P:proteolysis"/>
    <property type="evidence" value="ECO:0007669"/>
    <property type="project" value="UniProtKB-KW"/>
</dbReference>
<dbReference type="CDD" id="cd00433">
    <property type="entry name" value="Peptidase_M17"/>
    <property type="match status" value="1"/>
</dbReference>
<dbReference type="FunFam" id="3.40.630.10:FF:000004">
    <property type="entry name" value="Probable cytosol aminopeptidase"/>
    <property type="match status" value="1"/>
</dbReference>
<dbReference type="Gene3D" id="3.40.220.10">
    <property type="entry name" value="Leucine Aminopeptidase, subunit E, domain 1"/>
    <property type="match status" value="1"/>
</dbReference>
<dbReference type="Gene3D" id="3.40.630.10">
    <property type="entry name" value="Zn peptidases"/>
    <property type="match status" value="1"/>
</dbReference>
<dbReference type="HAMAP" id="MF_00181">
    <property type="entry name" value="Cytosol_peptidase_M17"/>
    <property type="match status" value="1"/>
</dbReference>
<dbReference type="InterPro" id="IPR011356">
    <property type="entry name" value="Leucine_aapep/pepB"/>
</dbReference>
<dbReference type="InterPro" id="IPR043472">
    <property type="entry name" value="Macro_dom-like"/>
</dbReference>
<dbReference type="InterPro" id="IPR000819">
    <property type="entry name" value="Peptidase_M17_C"/>
</dbReference>
<dbReference type="InterPro" id="IPR023042">
    <property type="entry name" value="Peptidase_M17_leu_NH2_pept"/>
</dbReference>
<dbReference type="InterPro" id="IPR008283">
    <property type="entry name" value="Peptidase_M17_N"/>
</dbReference>
<dbReference type="NCBIfam" id="NF002073">
    <property type="entry name" value="PRK00913.1-2"/>
    <property type="match status" value="1"/>
</dbReference>
<dbReference type="NCBIfam" id="NF002074">
    <property type="entry name" value="PRK00913.1-4"/>
    <property type="match status" value="1"/>
</dbReference>
<dbReference type="NCBIfam" id="NF002077">
    <property type="entry name" value="PRK00913.2-4"/>
    <property type="match status" value="1"/>
</dbReference>
<dbReference type="PANTHER" id="PTHR11963:SF23">
    <property type="entry name" value="CYTOSOL AMINOPEPTIDASE"/>
    <property type="match status" value="1"/>
</dbReference>
<dbReference type="PANTHER" id="PTHR11963">
    <property type="entry name" value="LEUCINE AMINOPEPTIDASE-RELATED"/>
    <property type="match status" value="1"/>
</dbReference>
<dbReference type="Pfam" id="PF00883">
    <property type="entry name" value="Peptidase_M17"/>
    <property type="match status" value="1"/>
</dbReference>
<dbReference type="Pfam" id="PF02789">
    <property type="entry name" value="Peptidase_M17_N"/>
    <property type="match status" value="1"/>
</dbReference>
<dbReference type="PRINTS" id="PR00481">
    <property type="entry name" value="LAMNOPPTDASE"/>
</dbReference>
<dbReference type="SUPFAM" id="SSF52949">
    <property type="entry name" value="Macro domain-like"/>
    <property type="match status" value="1"/>
</dbReference>
<dbReference type="SUPFAM" id="SSF53187">
    <property type="entry name" value="Zn-dependent exopeptidases"/>
    <property type="match status" value="1"/>
</dbReference>
<dbReference type="PROSITE" id="PS00631">
    <property type="entry name" value="CYTOSOL_AP"/>
    <property type="match status" value="1"/>
</dbReference>
<name>AMPA_NITEC</name>
<accession>Q0AIF5</accession>
<feature type="chain" id="PRO_1000019942" description="Probable cytosol aminopeptidase">
    <location>
        <begin position="1"/>
        <end position="497"/>
    </location>
</feature>
<feature type="active site" evidence="1">
    <location>
        <position position="279"/>
    </location>
</feature>
<feature type="active site" evidence="1">
    <location>
        <position position="353"/>
    </location>
</feature>
<feature type="binding site" evidence="1">
    <location>
        <position position="267"/>
    </location>
    <ligand>
        <name>Mn(2+)</name>
        <dbReference type="ChEBI" id="CHEBI:29035"/>
        <label>2</label>
    </ligand>
</feature>
<feature type="binding site" evidence="1">
    <location>
        <position position="272"/>
    </location>
    <ligand>
        <name>Mn(2+)</name>
        <dbReference type="ChEBI" id="CHEBI:29035"/>
        <label>1</label>
    </ligand>
</feature>
<feature type="binding site" evidence="1">
    <location>
        <position position="272"/>
    </location>
    <ligand>
        <name>Mn(2+)</name>
        <dbReference type="ChEBI" id="CHEBI:29035"/>
        <label>2</label>
    </ligand>
</feature>
<feature type="binding site" evidence="1">
    <location>
        <position position="290"/>
    </location>
    <ligand>
        <name>Mn(2+)</name>
        <dbReference type="ChEBI" id="CHEBI:29035"/>
        <label>2</label>
    </ligand>
</feature>
<feature type="binding site" evidence="1">
    <location>
        <position position="349"/>
    </location>
    <ligand>
        <name>Mn(2+)</name>
        <dbReference type="ChEBI" id="CHEBI:29035"/>
        <label>1</label>
    </ligand>
</feature>
<feature type="binding site" evidence="1">
    <location>
        <position position="351"/>
    </location>
    <ligand>
        <name>Mn(2+)</name>
        <dbReference type="ChEBI" id="CHEBI:29035"/>
        <label>1</label>
    </ligand>
</feature>
<feature type="binding site" evidence="1">
    <location>
        <position position="351"/>
    </location>
    <ligand>
        <name>Mn(2+)</name>
        <dbReference type="ChEBI" id="CHEBI:29035"/>
        <label>2</label>
    </ligand>
</feature>
<proteinExistence type="inferred from homology"/>
<keyword id="KW-0031">Aminopeptidase</keyword>
<keyword id="KW-0963">Cytoplasm</keyword>
<keyword id="KW-0378">Hydrolase</keyword>
<keyword id="KW-0464">Manganese</keyword>
<keyword id="KW-0479">Metal-binding</keyword>
<keyword id="KW-0645">Protease</keyword>
<evidence type="ECO:0000255" key="1">
    <source>
        <dbReference type="HAMAP-Rule" id="MF_00181"/>
    </source>
</evidence>
<organism>
    <name type="scientific">Nitrosomonas eutropha (strain DSM 101675 / C91 / Nm57)</name>
    <dbReference type="NCBI Taxonomy" id="335283"/>
    <lineage>
        <taxon>Bacteria</taxon>
        <taxon>Pseudomonadati</taxon>
        <taxon>Pseudomonadota</taxon>
        <taxon>Betaproteobacteria</taxon>
        <taxon>Nitrosomonadales</taxon>
        <taxon>Nitrosomonadaceae</taxon>
        <taxon>Nitrosomonas</taxon>
    </lineage>
</organism>
<protein>
    <recommendedName>
        <fullName evidence="1">Probable cytosol aminopeptidase</fullName>
        <ecNumber evidence="1">3.4.11.1</ecNumber>
    </recommendedName>
    <alternativeName>
        <fullName evidence="1">Leucine aminopeptidase</fullName>
        <shortName evidence="1">LAP</shortName>
        <ecNumber evidence="1">3.4.11.10</ecNumber>
    </alternativeName>
    <alternativeName>
        <fullName evidence="1">Leucyl aminopeptidase</fullName>
    </alternativeName>
</protein>
<gene>
    <name evidence="1" type="primary">pepA</name>
    <name type="ordered locus">Neut_0599</name>
</gene>
<sequence length="497" mass="53522">MDFAIQAGDLGKYYGDCIVAGVFESRKLTEAAKALDEMCRGYLTKVLDQGDMDGRANTTLLLHNVPAIGSKRVLLVGLGKEEEYVEKVFLEAIRAAFKALHQTGVKDVGLCVADLIVKGRDTAWSVLQSTLLVEESVYRFDRLKSKREERQPSLQKIIFLIGDEAARAGAEQAFKQGAAIACGMNVTKDLGNLAPNICTPTYLAEQAGEMAKTYNLKLSVLEEKDMEALGMGALLAVARGSHQPAKLIVLEYHGREGIEKPVVLVGKGVTFDTGGISLKPAVDLDEMKYDMGGAASVFGTLTAVAEMKLPINVTAIIPTTENMPGGNATKPGDVVTSLSGQTIEILNTDAEGRLILCDALTYAERYNPDVVIDIATLTGACVVALGHVVSGLMGTDEPLVQELLQAGEKASDRAWQLPLGEEYQELLKSNFADMANIGGRWGGAITAACFLSRFTRKYRWAHLDIAGTAWKSGKEKGATGRPVPLLTQFLIDRAQQH</sequence>
<reference key="1">
    <citation type="journal article" date="2007" name="Environ. Microbiol.">
        <title>Whole-genome analysis of the ammonia-oxidizing bacterium, Nitrosomonas eutropha C91: implications for niche adaptation.</title>
        <authorList>
            <person name="Stein L.Y."/>
            <person name="Arp D.J."/>
            <person name="Berube P.M."/>
            <person name="Chain P.S."/>
            <person name="Hauser L."/>
            <person name="Jetten M.S."/>
            <person name="Klotz M.G."/>
            <person name="Larimer F.W."/>
            <person name="Norton J.M."/>
            <person name="Op den Camp H.J.M."/>
            <person name="Shin M."/>
            <person name="Wei X."/>
        </authorList>
    </citation>
    <scope>NUCLEOTIDE SEQUENCE [LARGE SCALE GENOMIC DNA]</scope>
    <source>
        <strain>DSM 101675 / C91 / Nm57</strain>
    </source>
</reference>